<name>ICMT_RAT</name>
<sequence length="284" mass="31812">MAGCAARVPPGSEARLSLATFLLGASVLALPLLTRAGLQGRTGLALYVAGLNALLLLLYRPPRYQIAIRACFLGFVFGCGVLLSFSQSSWNHFGWYVCSLSLFHYSEYLVTAVNNPKSLSLDSFLLNHSLEYTVAALSSWIEFTLENIFWPELKQITWLSAAGLLMVIFGECLRKVAMFTAGSNFNHVVQSEKSDTHTLVTSGVYAWCRHPSYVGWFYWSIGTQVMLCNPICGVVYALTVWRFFRDRTEEEEISLIHFFGEEYLDYKKRVPTGLPFIKGVKVGL</sequence>
<protein>
    <recommendedName>
        <fullName>Protein-S-isoprenylcysteine O-methyltransferase</fullName>
        <ecNumber evidence="2">2.1.1.100</ecNumber>
    </recommendedName>
    <alternativeName>
        <fullName>Farnesyl cysteine carboxyl methyltransferase</fullName>
        <shortName>FCMT</shortName>
    </alternativeName>
    <alternativeName>
        <fullName>Isoprenylcysteine carboxylmethyltransferase</fullName>
    </alternativeName>
    <alternativeName>
        <fullName>Prenylated protein carboxyl methyltransferase</fullName>
        <shortName>PPMT</shortName>
    </alternativeName>
    <alternativeName>
        <fullName>Prenylcysteine carboxyl methyltransferase</fullName>
        <shortName>pcCMT</shortName>
    </alternativeName>
</protein>
<accession>Q9WVM4</accession>
<accession>G3V7G5</accession>
<feature type="chain" id="PRO_0000209896" description="Protein-S-isoprenylcysteine O-methyltransferase">
    <location>
        <begin position="1"/>
        <end position="284"/>
    </location>
</feature>
<feature type="topological domain" description="Cytoplasmic" evidence="4">
    <location>
        <begin position="1"/>
        <end position="16"/>
    </location>
</feature>
<feature type="transmembrane region" description="Helical" evidence="3">
    <location>
        <begin position="17"/>
        <end position="33"/>
    </location>
</feature>
<feature type="topological domain" description="Lumenal" evidence="4">
    <location>
        <begin position="34"/>
        <end position="41"/>
    </location>
</feature>
<feature type="transmembrane region" description="Helical" evidence="3">
    <location>
        <begin position="42"/>
        <end position="59"/>
    </location>
</feature>
<feature type="topological domain" description="Cytoplasmic" evidence="4">
    <location>
        <begin position="60"/>
        <end position="69"/>
    </location>
</feature>
<feature type="transmembrane region" description="Helical" evidence="3">
    <location>
        <begin position="70"/>
        <end position="87"/>
    </location>
</feature>
<feature type="topological domain" description="Lumenal" evidence="4">
    <location>
        <begin position="88"/>
        <end position="92"/>
    </location>
</feature>
<feature type="transmembrane region" description="Helical" evidence="3">
    <location>
        <begin position="93"/>
        <end position="112"/>
    </location>
</feature>
<feature type="topological domain" description="Cytoplasmic" evidence="4">
    <location>
        <begin position="113"/>
        <end position="131"/>
    </location>
</feature>
<feature type="transmembrane region" description="Helical" evidence="3">
    <location>
        <begin position="132"/>
        <end position="149"/>
    </location>
</feature>
<feature type="topological domain" description="Lumenal" evidence="4">
    <location>
        <begin position="150"/>
        <end position="154"/>
    </location>
</feature>
<feature type="transmembrane region" description="Helical" evidence="3">
    <location>
        <begin position="155"/>
        <end position="174"/>
    </location>
</feature>
<feature type="topological domain" description="Cytoplasmic" evidence="4">
    <location>
        <begin position="175"/>
        <end position="212"/>
    </location>
</feature>
<feature type="transmembrane region" description="Helical" evidence="3">
    <location>
        <begin position="213"/>
        <end position="228"/>
    </location>
</feature>
<feature type="topological domain" description="Lumenal" evidence="4">
    <location>
        <position position="229"/>
    </location>
</feature>
<feature type="transmembrane region" description="Helical" evidence="3">
    <location>
        <begin position="230"/>
        <end position="244"/>
    </location>
</feature>
<feature type="topological domain" description="Cytoplasmic" evidence="4">
    <location>
        <begin position="245"/>
        <end position="284"/>
    </location>
</feature>
<feature type="binding site" evidence="1">
    <location>
        <position position="190"/>
    </location>
    <ligand>
        <name>S-adenosyl-L-methionine</name>
        <dbReference type="ChEBI" id="CHEBI:59789"/>
    </ligand>
</feature>
<feature type="binding site" evidence="1">
    <location>
        <begin position="197"/>
        <end position="200"/>
    </location>
    <ligand>
        <name>S-adenosyl-L-methionine</name>
        <dbReference type="ChEBI" id="CHEBI:59789"/>
    </ligand>
</feature>
<feature type="binding site" evidence="1">
    <location>
        <position position="205"/>
    </location>
    <ligand>
        <name>S-adenosyl-L-methionine</name>
        <dbReference type="ChEBI" id="CHEBI:59789"/>
    </ligand>
</feature>
<feature type="binding site" evidence="1">
    <location>
        <begin position="210"/>
        <end position="213"/>
    </location>
    <ligand>
        <name>S-adenosyl-L-methionine</name>
        <dbReference type="ChEBI" id="CHEBI:59789"/>
    </ligand>
</feature>
<feature type="binding site" evidence="1">
    <location>
        <position position="247"/>
    </location>
    <ligand>
        <name>substrate</name>
    </ligand>
</feature>
<feature type="binding site" evidence="1">
    <location>
        <position position="251"/>
    </location>
    <ligand>
        <name>S-adenosyl-L-methionine</name>
        <dbReference type="ChEBI" id="CHEBI:59789"/>
    </ligand>
</feature>
<dbReference type="EC" id="2.1.1.100" evidence="2"/>
<dbReference type="EMBL" id="AC135674">
    <property type="status" value="NOT_ANNOTATED_CDS"/>
    <property type="molecule type" value="Genomic_DNA"/>
</dbReference>
<dbReference type="EMBL" id="CH473968">
    <property type="protein sequence ID" value="EDL81231.1"/>
    <property type="molecule type" value="Genomic_DNA"/>
</dbReference>
<dbReference type="EMBL" id="AF075595">
    <property type="protein sequence ID" value="AAD42926.1"/>
    <property type="molecule type" value="mRNA"/>
</dbReference>
<dbReference type="RefSeq" id="NP_579844.2">
    <property type="nucleotide sequence ID" value="NM_133310.2"/>
</dbReference>
<dbReference type="SMR" id="Q9WVM4"/>
<dbReference type="FunCoup" id="Q9WVM4">
    <property type="interactions" value="674"/>
</dbReference>
<dbReference type="STRING" id="10116.ENSRNOP00000014625"/>
<dbReference type="BindingDB" id="Q9WVM4"/>
<dbReference type="ChEMBL" id="CHEMBL2298"/>
<dbReference type="PhosphoSitePlus" id="Q9WVM4"/>
<dbReference type="PaxDb" id="10116-ENSRNOP00000014625"/>
<dbReference type="Ensembl" id="ENSRNOT00000014625.6">
    <property type="protein sequence ID" value="ENSRNOP00000014625.3"/>
    <property type="gene ID" value="ENSRNOG00000010953.7"/>
</dbReference>
<dbReference type="GeneID" id="170818"/>
<dbReference type="KEGG" id="rno:170818"/>
<dbReference type="UCSC" id="RGD:621618">
    <property type="organism name" value="rat"/>
</dbReference>
<dbReference type="AGR" id="RGD:621618"/>
<dbReference type="CTD" id="23463"/>
<dbReference type="RGD" id="621618">
    <property type="gene designation" value="Icmt"/>
</dbReference>
<dbReference type="eggNOG" id="KOG2628">
    <property type="taxonomic scope" value="Eukaryota"/>
</dbReference>
<dbReference type="GeneTree" id="ENSGT00390000017394"/>
<dbReference type="HOGENOM" id="CLU_065200_0_1_1"/>
<dbReference type="InParanoid" id="Q9WVM4"/>
<dbReference type="OMA" id="IKREEAY"/>
<dbReference type="OrthoDB" id="422086at2759"/>
<dbReference type="PhylomeDB" id="Q9WVM4"/>
<dbReference type="TreeFam" id="TF313769"/>
<dbReference type="Reactome" id="R-RNO-163841">
    <property type="pathway name" value="Gamma carboxylation, hypusinylation, hydroxylation, and arylsulfatase activation"/>
</dbReference>
<dbReference type="Reactome" id="R-RNO-9648002">
    <property type="pathway name" value="RAS processing"/>
</dbReference>
<dbReference type="SABIO-RK" id="Q9WVM4"/>
<dbReference type="PRO" id="PR:Q9WVM4"/>
<dbReference type="Proteomes" id="UP000002494">
    <property type="component" value="Chromosome 5"/>
</dbReference>
<dbReference type="Proteomes" id="UP000234681">
    <property type="component" value="Chromosome 5"/>
</dbReference>
<dbReference type="Bgee" id="ENSRNOG00000010953">
    <property type="expression patterns" value="Expressed in testis and 18 other cell types or tissues"/>
</dbReference>
<dbReference type="GO" id="GO:0098556">
    <property type="term" value="C:cytoplasmic side of rough endoplasmic reticulum membrane"/>
    <property type="evidence" value="ECO:0000266"/>
    <property type="project" value="RGD"/>
</dbReference>
<dbReference type="GO" id="GO:0005783">
    <property type="term" value="C:endoplasmic reticulum"/>
    <property type="evidence" value="ECO:0000266"/>
    <property type="project" value="RGD"/>
</dbReference>
<dbReference type="GO" id="GO:0015934">
    <property type="term" value="C:large ribosomal subunit"/>
    <property type="evidence" value="ECO:0000266"/>
    <property type="project" value="RGD"/>
</dbReference>
<dbReference type="GO" id="GO:0008140">
    <property type="term" value="F:cAMP response element binding protein binding"/>
    <property type="evidence" value="ECO:0000266"/>
    <property type="project" value="RGD"/>
</dbReference>
<dbReference type="GO" id="GO:0004671">
    <property type="term" value="F:protein C-terminal S-isoprenylcysteine carboxyl O-methyltransferase activity"/>
    <property type="evidence" value="ECO:0000315"/>
    <property type="project" value="RGD"/>
</dbReference>
<dbReference type="GO" id="GO:0030282">
    <property type="term" value="P:bone mineralization"/>
    <property type="evidence" value="ECO:0000266"/>
    <property type="project" value="RGD"/>
</dbReference>
<dbReference type="GO" id="GO:0080120">
    <property type="term" value="P:CAAX-box protein maturation"/>
    <property type="evidence" value="ECO:0000266"/>
    <property type="project" value="RGD"/>
</dbReference>
<dbReference type="GO" id="GO:0008340">
    <property type="term" value="P:determination of adult lifespan"/>
    <property type="evidence" value="ECO:0000266"/>
    <property type="project" value="RGD"/>
</dbReference>
<dbReference type="GO" id="GO:0048144">
    <property type="term" value="P:fibroblast proliferation"/>
    <property type="evidence" value="ECO:0000266"/>
    <property type="project" value="RGD"/>
</dbReference>
<dbReference type="GO" id="GO:0001701">
    <property type="term" value="P:in utero embryonic development"/>
    <property type="evidence" value="ECO:0000266"/>
    <property type="project" value="RGD"/>
</dbReference>
<dbReference type="GO" id="GO:0001889">
    <property type="term" value="P:liver development"/>
    <property type="evidence" value="ECO:0000266"/>
    <property type="project" value="RGD"/>
</dbReference>
<dbReference type="GO" id="GO:0032259">
    <property type="term" value="P:methylation"/>
    <property type="evidence" value="ECO:0007669"/>
    <property type="project" value="UniProtKB-KW"/>
</dbReference>
<dbReference type="GO" id="GO:0035264">
    <property type="term" value="P:multicellular organism growth"/>
    <property type="evidence" value="ECO:0000266"/>
    <property type="project" value="RGD"/>
</dbReference>
<dbReference type="GO" id="GO:0050905">
    <property type="term" value="P:neuromuscular process"/>
    <property type="evidence" value="ECO:0000266"/>
    <property type="project" value="RGD"/>
</dbReference>
<dbReference type="GO" id="GO:0048146">
    <property type="term" value="P:positive regulation of fibroblast proliferation"/>
    <property type="evidence" value="ECO:0000266"/>
    <property type="project" value="RGD"/>
</dbReference>
<dbReference type="GO" id="GO:0008104">
    <property type="term" value="P:protein localization"/>
    <property type="evidence" value="ECO:0000266"/>
    <property type="project" value="RGD"/>
</dbReference>
<dbReference type="GO" id="GO:2000772">
    <property type="term" value="P:regulation of cellular senescence"/>
    <property type="evidence" value="ECO:0000266"/>
    <property type="project" value="RGD"/>
</dbReference>
<dbReference type="GO" id="GO:0032880">
    <property type="term" value="P:regulation of protein localization"/>
    <property type="evidence" value="ECO:0000266"/>
    <property type="project" value="RGD"/>
</dbReference>
<dbReference type="GO" id="GO:0046578">
    <property type="term" value="P:regulation of Ras protein signal transduction"/>
    <property type="evidence" value="ECO:0000266"/>
    <property type="project" value="RGD"/>
</dbReference>
<dbReference type="GO" id="GO:0046498">
    <property type="term" value="P:S-adenosylhomocysteine metabolic process"/>
    <property type="evidence" value="ECO:0000315"/>
    <property type="project" value="RGD"/>
</dbReference>
<dbReference type="GO" id="GO:0046499">
    <property type="term" value="P:S-adenosylmethioninamine metabolic process"/>
    <property type="evidence" value="ECO:0000315"/>
    <property type="project" value="RGD"/>
</dbReference>
<dbReference type="GO" id="GO:0031929">
    <property type="term" value="P:TOR signaling"/>
    <property type="evidence" value="ECO:0000266"/>
    <property type="project" value="RGD"/>
</dbReference>
<dbReference type="FunFam" id="1.20.120.1630:FF:000007">
    <property type="entry name" value="Protein-S-isoprenylcysteine O-methyltransferase"/>
    <property type="match status" value="1"/>
</dbReference>
<dbReference type="Gene3D" id="1.20.120.1630">
    <property type="match status" value="1"/>
</dbReference>
<dbReference type="InterPro" id="IPR007269">
    <property type="entry name" value="ICMT_MeTrfase"/>
</dbReference>
<dbReference type="InterPro" id="IPR025770">
    <property type="entry name" value="PPMT_MeTrfase"/>
</dbReference>
<dbReference type="PANTHER" id="PTHR12714">
    <property type="entry name" value="PROTEIN-S ISOPRENYLCYSTEINE O-METHYLTRANSFERASE"/>
    <property type="match status" value="1"/>
</dbReference>
<dbReference type="PANTHER" id="PTHR12714:SF9">
    <property type="entry name" value="PROTEIN-S-ISOPRENYLCYSTEINE O-METHYLTRANSFERASE"/>
    <property type="match status" value="1"/>
</dbReference>
<dbReference type="Pfam" id="PF04140">
    <property type="entry name" value="ICMT"/>
    <property type="match status" value="1"/>
</dbReference>
<dbReference type="PROSITE" id="PS51564">
    <property type="entry name" value="SAM_ICMT"/>
    <property type="match status" value="1"/>
</dbReference>
<comment type="function">
    <text evidence="2">Catalyzes the post-translational methylation of isoprenylated C-terminal cysteine residues.</text>
</comment>
<comment type="catalytic activity">
    <reaction evidence="2">
        <text>[protein]-C-terminal S-[(2E,6E)-farnesyl]-L-cysteine + S-adenosyl-L-methionine = [protein]-C-terminal S-[(2E,6E)-farnesyl]-L-cysteine methyl ester + S-adenosyl-L-homocysteine</text>
        <dbReference type="Rhea" id="RHEA:21672"/>
        <dbReference type="Rhea" id="RHEA-COMP:12125"/>
        <dbReference type="Rhea" id="RHEA-COMP:12126"/>
        <dbReference type="ChEBI" id="CHEBI:57856"/>
        <dbReference type="ChEBI" id="CHEBI:59789"/>
        <dbReference type="ChEBI" id="CHEBI:90510"/>
        <dbReference type="ChEBI" id="CHEBI:90511"/>
        <dbReference type="EC" id="2.1.1.100"/>
    </reaction>
</comment>
<comment type="subcellular location">
    <subcellularLocation>
        <location evidence="2">Endoplasmic reticulum membrane</location>
        <topology evidence="2">Multi-pass membrane protein</topology>
    </subcellularLocation>
</comment>
<comment type="similarity">
    <text evidence="4">Belongs to the class VI-like SAM-binding methyltransferase superfamily. Isoprenylcysteine carboxyl methyltransferase family.</text>
</comment>
<keyword id="KW-0256">Endoplasmic reticulum</keyword>
<keyword id="KW-0472">Membrane</keyword>
<keyword id="KW-0489">Methyltransferase</keyword>
<keyword id="KW-1185">Reference proteome</keyword>
<keyword id="KW-0949">S-adenosyl-L-methionine</keyword>
<keyword id="KW-0808">Transferase</keyword>
<keyword id="KW-0812">Transmembrane</keyword>
<keyword id="KW-1133">Transmembrane helix</keyword>
<reference evidence="7" key="1">
    <citation type="journal article" date="2004" name="Nature">
        <title>Genome sequence of the Brown Norway rat yields insights into mammalian evolution.</title>
        <authorList>
            <person name="Gibbs R.A."/>
            <person name="Weinstock G.M."/>
            <person name="Metzker M.L."/>
            <person name="Muzny D.M."/>
            <person name="Sodergren E.J."/>
            <person name="Scherer S."/>
            <person name="Scott G."/>
            <person name="Steffen D."/>
            <person name="Worley K.C."/>
            <person name="Burch P.E."/>
            <person name="Okwuonu G."/>
            <person name="Hines S."/>
            <person name="Lewis L."/>
            <person name="Deramo C."/>
            <person name="Delgado O."/>
            <person name="Dugan-Rocha S."/>
            <person name="Miner G."/>
            <person name="Morgan M."/>
            <person name="Hawes A."/>
            <person name="Gill R."/>
            <person name="Holt R.A."/>
            <person name="Adams M.D."/>
            <person name="Amanatides P.G."/>
            <person name="Baden-Tillson H."/>
            <person name="Barnstead M."/>
            <person name="Chin S."/>
            <person name="Evans C.A."/>
            <person name="Ferriera S."/>
            <person name="Fosler C."/>
            <person name="Glodek A."/>
            <person name="Gu Z."/>
            <person name="Jennings D."/>
            <person name="Kraft C.L."/>
            <person name="Nguyen T."/>
            <person name="Pfannkoch C.M."/>
            <person name="Sitter C."/>
            <person name="Sutton G.G."/>
            <person name="Venter J.C."/>
            <person name="Woodage T."/>
            <person name="Smith D."/>
            <person name="Lee H.-M."/>
            <person name="Gustafson E."/>
            <person name="Cahill P."/>
            <person name="Kana A."/>
            <person name="Doucette-Stamm L."/>
            <person name="Weinstock K."/>
            <person name="Fechtel K."/>
            <person name="Weiss R.B."/>
            <person name="Dunn D.M."/>
            <person name="Green E.D."/>
            <person name="Blakesley R.W."/>
            <person name="Bouffard G.G."/>
            <person name="De Jong P.J."/>
            <person name="Osoegawa K."/>
            <person name="Zhu B."/>
            <person name="Marra M."/>
            <person name="Schein J."/>
            <person name="Bosdet I."/>
            <person name="Fjell C."/>
            <person name="Jones S."/>
            <person name="Krzywinski M."/>
            <person name="Mathewson C."/>
            <person name="Siddiqui A."/>
            <person name="Wye N."/>
            <person name="McPherson J."/>
            <person name="Zhao S."/>
            <person name="Fraser C.M."/>
            <person name="Shetty J."/>
            <person name="Shatsman S."/>
            <person name="Geer K."/>
            <person name="Chen Y."/>
            <person name="Abramzon S."/>
            <person name="Nierman W.C."/>
            <person name="Havlak P.H."/>
            <person name="Chen R."/>
            <person name="Durbin K.J."/>
            <person name="Egan A."/>
            <person name="Ren Y."/>
            <person name="Song X.-Z."/>
            <person name="Li B."/>
            <person name="Liu Y."/>
            <person name="Qin X."/>
            <person name="Cawley S."/>
            <person name="Cooney A.J."/>
            <person name="D'Souza L.M."/>
            <person name="Martin K."/>
            <person name="Wu J.Q."/>
            <person name="Gonzalez-Garay M.L."/>
            <person name="Jackson A.R."/>
            <person name="Kalafus K.J."/>
            <person name="McLeod M.P."/>
            <person name="Milosavljevic A."/>
            <person name="Virk D."/>
            <person name="Volkov A."/>
            <person name="Wheeler D.A."/>
            <person name="Zhang Z."/>
            <person name="Bailey J.A."/>
            <person name="Eichler E.E."/>
            <person name="Tuzun E."/>
            <person name="Birney E."/>
            <person name="Mongin E."/>
            <person name="Ureta-Vidal A."/>
            <person name="Woodwark C."/>
            <person name="Zdobnov E."/>
            <person name="Bork P."/>
            <person name="Suyama M."/>
            <person name="Torrents D."/>
            <person name="Alexandersson M."/>
            <person name="Trask B.J."/>
            <person name="Young J.M."/>
            <person name="Huang H."/>
            <person name="Wang H."/>
            <person name="Xing H."/>
            <person name="Daniels S."/>
            <person name="Gietzen D."/>
            <person name="Schmidt J."/>
            <person name="Stevens K."/>
            <person name="Vitt U."/>
            <person name="Wingrove J."/>
            <person name="Camara F."/>
            <person name="Mar Alba M."/>
            <person name="Abril J.F."/>
            <person name="Guigo R."/>
            <person name="Smit A."/>
            <person name="Dubchak I."/>
            <person name="Rubin E.M."/>
            <person name="Couronne O."/>
            <person name="Poliakov A."/>
            <person name="Huebner N."/>
            <person name="Ganten D."/>
            <person name="Goesele C."/>
            <person name="Hummel O."/>
            <person name="Kreitler T."/>
            <person name="Lee Y.-A."/>
            <person name="Monti J."/>
            <person name="Schulz H."/>
            <person name="Zimdahl H."/>
            <person name="Himmelbauer H."/>
            <person name="Lehrach H."/>
            <person name="Jacob H.J."/>
            <person name="Bromberg S."/>
            <person name="Gullings-Handley J."/>
            <person name="Jensen-Seaman M.I."/>
            <person name="Kwitek A.E."/>
            <person name="Lazar J."/>
            <person name="Pasko D."/>
            <person name="Tonellato P.J."/>
            <person name="Twigger S."/>
            <person name="Ponting C.P."/>
            <person name="Duarte J.M."/>
            <person name="Rice S."/>
            <person name="Goodstadt L."/>
            <person name="Beatson S.A."/>
            <person name="Emes R.D."/>
            <person name="Winter E.E."/>
            <person name="Webber C."/>
            <person name="Brandt P."/>
            <person name="Nyakatura G."/>
            <person name="Adetobi M."/>
            <person name="Chiaromonte F."/>
            <person name="Elnitski L."/>
            <person name="Eswara P."/>
            <person name="Hardison R.C."/>
            <person name="Hou M."/>
            <person name="Kolbe D."/>
            <person name="Makova K."/>
            <person name="Miller W."/>
            <person name="Nekrutenko A."/>
            <person name="Riemer C."/>
            <person name="Schwartz S."/>
            <person name="Taylor J."/>
            <person name="Yang S."/>
            <person name="Zhang Y."/>
            <person name="Lindpaintner K."/>
            <person name="Andrews T.D."/>
            <person name="Caccamo M."/>
            <person name="Clamp M."/>
            <person name="Clarke L."/>
            <person name="Curwen V."/>
            <person name="Durbin R.M."/>
            <person name="Eyras E."/>
            <person name="Searle S.M."/>
            <person name="Cooper G.M."/>
            <person name="Batzoglou S."/>
            <person name="Brudno M."/>
            <person name="Sidow A."/>
            <person name="Stone E.A."/>
            <person name="Payseur B.A."/>
            <person name="Bourque G."/>
            <person name="Lopez-Otin C."/>
            <person name="Puente X.S."/>
            <person name="Chakrabarti K."/>
            <person name="Chatterji S."/>
            <person name="Dewey C."/>
            <person name="Pachter L."/>
            <person name="Bray N."/>
            <person name="Yap V.B."/>
            <person name="Caspi A."/>
            <person name="Tesler G."/>
            <person name="Pevzner P.A."/>
            <person name="Haussler D."/>
            <person name="Roskin K.M."/>
            <person name="Baertsch R."/>
            <person name="Clawson H."/>
            <person name="Furey T.S."/>
            <person name="Hinrichs A.S."/>
            <person name="Karolchik D."/>
            <person name="Kent W.J."/>
            <person name="Rosenbloom K.R."/>
            <person name="Trumbower H."/>
            <person name="Weirauch M."/>
            <person name="Cooper D.N."/>
            <person name="Stenson P.D."/>
            <person name="Ma B."/>
            <person name="Brent M."/>
            <person name="Arumugam M."/>
            <person name="Shteynberg D."/>
            <person name="Copley R.R."/>
            <person name="Taylor M.S."/>
            <person name="Riethman H."/>
            <person name="Mudunuri U."/>
            <person name="Peterson J."/>
            <person name="Guyer M."/>
            <person name="Felsenfeld A."/>
            <person name="Old S."/>
            <person name="Mockrin S."/>
            <person name="Collins F.S."/>
        </authorList>
    </citation>
    <scope>NUCLEOTIDE SEQUENCE [LARGE SCALE GENOMIC DNA]</scope>
    <source>
        <strain evidence="7">Brown Norway</strain>
    </source>
</reference>
<reference evidence="7" key="2">
    <citation type="submission" date="2005-07" db="EMBL/GenBank/DDBJ databases">
        <authorList>
            <person name="Mural R.J."/>
            <person name="Adams M.D."/>
            <person name="Myers E.W."/>
            <person name="Smith H.O."/>
            <person name="Venter J.C."/>
        </authorList>
    </citation>
    <scope>NUCLEOTIDE SEQUENCE [LARGE SCALE GENOMIC DNA]</scope>
    <source>
        <strain evidence="6">Brown Norway</strain>
    </source>
</reference>
<reference evidence="5" key="3">
    <citation type="submission" date="1998-06" db="EMBL/GenBank/DDBJ databases">
        <title>Molecular cloning of farnesyl cysteine carboxyl methyltransferase gene from rat olfactory bulb.</title>
        <authorList>
            <person name="Otaki J.M."/>
            <person name="Firestein S."/>
        </authorList>
    </citation>
    <scope>NUCLEOTIDE SEQUENCE [MRNA] OF 53-284</scope>
    <source>
        <strain>Sprague-Dawley</strain>
        <tissue>Olfactory bulb</tissue>
    </source>
</reference>
<evidence type="ECO:0000250" key="1">
    <source>
        <dbReference type="UniProtKB" id="D6WJ77"/>
    </source>
</evidence>
<evidence type="ECO:0000250" key="2">
    <source>
        <dbReference type="UniProtKB" id="O60725"/>
    </source>
</evidence>
<evidence type="ECO:0000255" key="3"/>
<evidence type="ECO:0000305" key="4"/>
<evidence type="ECO:0000312" key="5">
    <source>
        <dbReference type="EMBL" id="AAD42926.1"/>
    </source>
</evidence>
<evidence type="ECO:0000312" key="6">
    <source>
        <dbReference type="EMBL" id="EDL81231.1"/>
    </source>
</evidence>
<evidence type="ECO:0000312" key="7">
    <source>
        <dbReference type="Proteomes" id="UP000002494"/>
    </source>
</evidence>
<evidence type="ECO:0000312" key="8">
    <source>
        <dbReference type="RGD" id="621618"/>
    </source>
</evidence>
<proteinExistence type="evidence at transcript level"/>
<organism>
    <name type="scientific">Rattus norvegicus</name>
    <name type="common">Rat</name>
    <dbReference type="NCBI Taxonomy" id="10116"/>
    <lineage>
        <taxon>Eukaryota</taxon>
        <taxon>Metazoa</taxon>
        <taxon>Chordata</taxon>
        <taxon>Craniata</taxon>
        <taxon>Vertebrata</taxon>
        <taxon>Euteleostomi</taxon>
        <taxon>Mammalia</taxon>
        <taxon>Eutheria</taxon>
        <taxon>Euarchontoglires</taxon>
        <taxon>Glires</taxon>
        <taxon>Rodentia</taxon>
        <taxon>Myomorpha</taxon>
        <taxon>Muroidea</taxon>
        <taxon>Muridae</taxon>
        <taxon>Murinae</taxon>
        <taxon>Rattus</taxon>
    </lineage>
</organism>
<gene>
    <name evidence="8" type="primary">Icmt</name>
</gene>